<reference key="1">
    <citation type="journal article" date="2009" name="Genome Res.">
        <title>Comparative genomic analyses of the human fungal pathogens Coccidioides and their relatives.</title>
        <authorList>
            <person name="Sharpton T.J."/>
            <person name="Stajich J.E."/>
            <person name="Rounsley S.D."/>
            <person name="Gardner M.J."/>
            <person name="Wortman J.R."/>
            <person name="Jordar V.S."/>
            <person name="Maiti R."/>
            <person name="Kodira C.D."/>
            <person name="Neafsey D.E."/>
            <person name="Zeng Q."/>
            <person name="Hung C.-Y."/>
            <person name="McMahan C."/>
            <person name="Muszewska A."/>
            <person name="Grynberg M."/>
            <person name="Mandel M.A."/>
            <person name="Kellner E.M."/>
            <person name="Barker B.M."/>
            <person name="Galgiani J.N."/>
            <person name="Orbach M.J."/>
            <person name="Kirkland T.N."/>
            <person name="Cole G.T."/>
            <person name="Henn M.R."/>
            <person name="Birren B.W."/>
            <person name="Taylor J.W."/>
        </authorList>
    </citation>
    <scope>NUCLEOTIDE SEQUENCE [LARGE SCALE GENOMIC DNA]</scope>
    <source>
        <strain>UAMH 1704</strain>
    </source>
</reference>
<comment type="subcellular location">
    <subcellularLocation>
        <location>Mitochondrion</location>
    </subcellularLocation>
    <subcellularLocation>
        <location evidence="1">Membrane</location>
        <topology evidence="1">Single-pass membrane protein</topology>
    </subcellularLocation>
</comment>
<comment type="similarity">
    <text evidence="5">Belongs to the LCL3 family.</text>
</comment>
<organism>
    <name type="scientific">Uncinocarpus reesii (strain UAMH 1704)</name>
    <dbReference type="NCBI Taxonomy" id="336963"/>
    <lineage>
        <taxon>Eukaryota</taxon>
        <taxon>Fungi</taxon>
        <taxon>Dikarya</taxon>
        <taxon>Ascomycota</taxon>
        <taxon>Pezizomycotina</taxon>
        <taxon>Eurotiomycetes</taxon>
        <taxon>Eurotiomycetidae</taxon>
        <taxon>Onygenales</taxon>
        <taxon>Onygenaceae</taxon>
        <taxon>Uncinocarpus</taxon>
    </lineage>
</organism>
<keyword id="KW-0106">Calcium</keyword>
<keyword id="KW-0255">Endonuclease</keyword>
<keyword id="KW-0378">Hydrolase</keyword>
<keyword id="KW-0472">Membrane</keyword>
<keyword id="KW-0479">Metal-binding</keyword>
<keyword id="KW-0496">Mitochondrion</keyword>
<keyword id="KW-0540">Nuclease</keyword>
<keyword id="KW-1185">Reference proteome</keyword>
<keyword id="KW-0812">Transmembrane</keyword>
<keyword id="KW-1133">Transmembrane helix</keyword>
<evidence type="ECO:0000250" key="1"/>
<evidence type="ECO:0000255" key="2"/>
<evidence type="ECO:0000255" key="3">
    <source>
        <dbReference type="PROSITE-ProRule" id="PRU00272"/>
    </source>
</evidence>
<evidence type="ECO:0000256" key="4">
    <source>
        <dbReference type="SAM" id="MobiDB-lite"/>
    </source>
</evidence>
<evidence type="ECO:0000305" key="5"/>
<name>LCL3_UNCRE</name>
<accession>C4JVW2</accession>
<proteinExistence type="inferred from homology"/>
<protein>
    <recommendedName>
        <fullName>Probable endonuclease LCL3</fullName>
        <ecNumber>3.1.-.-</ecNumber>
    </recommendedName>
</protein>
<feature type="chain" id="PRO_0000408684" description="Probable endonuclease LCL3">
    <location>
        <begin position="1"/>
        <end position="303"/>
    </location>
</feature>
<feature type="transmembrane region" description="Helical" evidence="2">
    <location>
        <begin position="77"/>
        <end position="93"/>
    </location>
</feature>
<feature type="domain" description="TNase-like" evidence="3">
    <location>
        <begin position="115"/>
        <end position="276"/>
    </location>
</feature>
<feature type="region of interest" description="Disordered" evidence="4">
    <location>
        <begin position="1"/>
        <end position="59"/>
    </location>
</feature>
<feature type="region of interest" description="Disordered" evidence="4">
    <location>
        <begin position="281"/>
        <end position="303"/>
    </location>
</feature>
<feature type="compositionally biased region" description="Polar residues" evidence="4">
    <location>
        <begin position="49"/>
        <end position="59"/>
    </location>
</feature>
<feature type="compositionally biased region" description="Basic and acidic residues" evidence="4">
    <location>
        <begin position="283"/>
        <end position="303"/>
    </location>
</feature>
<feature type="active site" evidence="3">
    <location>
        <position position="164"/>
    </location>
</feature>
<feature type="active site" evidence="3">
    <location>
        <position position="172"/>
    </location>
</feature>
<feature type="active site" evidence="3">
    <location>
        <position position="212"/>
    </location>
</feature>
<feature type="binding site" evidence="3">
    <location>
        <position position="169"/>
    </location>
    <ligand>
        <name>Ca(2+)</name>
        <dbReference type="ChEBI" id="CHEBI:29108"/>
    </ligand>
</feature>
<dbReference type="EC" id="3.1.-.-"/>
<dbReference type="EMBL" id="CH476618">
    <property type="protein sequence ID" value="EEP81839.1"/>
    <property type="molecule type" value="Genomic_DNA"/>
</dbReference>
<dbReference type="RefSeq" id="XP_002583737.1">
    <property type="nucleotide sequence ID" value="XM_002583691.1"/>
</dbReference>
<dbReference type="SMR" id="C4JVW2"/>
<dbReference type="FunCoup" id="C4JVW2">
    <property type="interactions" value="12"/>
</dbReference>
<dbReference type="STRING" id="336963.C4JVW2"/>
<dbReference type="GeneID" id="8444111"/>
<dbReference type="KEGG" id="ure:UREG_06704"/>
<dbReference type="VEuPathDB" id="FungiDB:UREG_06704"/>
<dbReference type="eggNOG" id="ENOG502S1U4">
    <property type="taxonomic scope" value="Eukaryota"/>
</dbReference>
<dbReference type="HOGENOM" id="CLU_046484_0_1_1"/>
<dbReference type="InParanoid" id="C4JVW2"/>
<dbReference type="OMA" id="IYHTPGG"/>
<dbReference type="OrthoDB" id="430293at2759"/>
<dbReference type="Proteomes" id="UP000002058">
    <property type="component" value="Unassembled WGS sequence"/>
</dbReference>
<dbReference type="GO" id="GO:0016020">
    <property type="term" value="C:membrane"/>
    <property type="evidence" value="ECO:0007669"/>
    <property type="project" value="UniProtKB-SubCell"/>
</dbReference>
<dbReference type="GO" id="GO:0005739">
    <property type="term" value="C:mitochondrion"/>
    <property type="evidence" value="ECO:0007669"/>
    <property type="project" value="UniProtKB-SubCell"/>
</dbReference>
<dbReference type="GO" id="GO:0004519">
    <property type="term" value="F:endonuclease activity"/>
    <property type="evidence" value="ECO:0007669"/>
    <property type="project" value="UniProtKB-KW"/>
</dbReference>
<dbReference type="GO" id="GO:0046872">
    <property type="term" value="F:metal ion binding"/>
    <property type="evidence" value="ECO:0007669"/>
    <property type="project" value="UniProtKB-KW"/>
</dbReference>
<dbReference type="FunFam" id="2.40.50.90:FF:000029">
    <property type="entry name" value="Probable endonuclease lcl3"/>
    <property type="match status" value="1"/>
</dbReference>
<dbReference type="Gene3D" id="2.40.50.90">
    <property type="match status" value="1"/>
</dbReference>
<dbReference type="InterPro" id="IPR035437">
    <property type="entry name" value="SNase_OB-fold_sf"/>
</dbReference>
<dbReference type="InterPro" id="IPR016071">
    <property type="entry name" value="Staphylococal_nuclease_OB-fold"/>
</dbReference>
<dbReference type="PANTHER" id="PTHR12302">
    <property type="entry name" value="EBNA2 BINDING PROTEIN P100"/>
    <property type="match status" value="1"/>
</dbReference>
<dbReference type="PANTHER" id="PTHR12302:SF3">
    <property type="entry name" value="SERINE_THREONINE-PROTEIN KINASE 31"/>
    <property type="match status" value="1"/>
</dbReference>
<dbReference type="Pfam" id="PF00565">
    <property type="entry name" value="SNase"/>
    <property type="match status" value="1"/>
</dbReference>
<dbReference type="SMART" id="SM00318">
    <property type="entry name" value="SNc"/>
    <property type="match status" value="1"/>
</dbReference>
<dbReference type="SUPFAM" id="SSF50199">
    <property type="entry name" value="Staphylococcal nuclease"/>
    <property type="match status" value="1"/>
</dbReference>
<dbReference type="PROSITE" id="PS50830">
    <property type="entry name" value="TNASE_3"/>
    <property type="match status" value="1"/>
</dbReference>
<gene>
    <name type="primary">LCL3</name>
    <name type="ORF">UREG_06704</name>
</gene>
<sequence length="303" mass="34990">MRWLFWASPPQNDSHDASPNAHPRPIKPQRREAHQDHTPAPGQAAPEPTISNAQSSRDWNSSLNATDWKQFTEPKTIIPTALLTGGILLCVHIHRKYLRRIPEAGYISPSYFRRRSLLGKVTSVGDGDNFRLYHTPGGRLGGWEWLRKVPTGKNELRNRTIHIRLAGIDAPELPHFGRPAQPYSHEAHTWLTNYLLNRRVRAFLYRPDQYGRVVATVYVRRWLLFKQDVGLQMLKQGWATVYEAKTGVEFGGAELERKYRDAEAWAKRRGLGLWEGLKGKKKEKWESPREFKTRMAAEEAQRK</sequence>